<accession>Q9HIW7</accession>
<organism>
    <name type="scientific">Thermoplasma acidophilum (strain ATCC 25905 / DSM 1728 / JCM 9062 / NBRC 15155 / AMRC-C165)</name>
    <dbReference type="NCBI Taxonomy" id="273075"/>
    <lineage>
        <taxon>Archaea</taxon>
        <taxon>Methanobacteriati</taxon>
        <taxon>Thermoplasmatota</taxon>
        <taxon>Thermoplasmata</taxon>
        <taxon>Thermoplasmatales</taxon>
        <taxon>Thermoplasmataceae</taxon>
        <taxon>Thermoplasma</taxon>
    </lineage>
</organism>
<keyword id="KW-0002">3D-structure</keyword>
<keyword id="KW-0378">Hydrolase</keyword>
<keyword id="KW-0460">Magnesium</keyword>
<keyword id="KW-0479">Metal-binding</keyword>
<keyword id="KW-1185">Reference proteome</keyword>
<feature type="chain" id="PRO_0000424546" description="Trehalose-6-phosphate phosphatase-related protein">
    <location>
        <begin position="1"/>
        <end position="229"/>
    </location>
</feature>
<feature type="active site" description="Nucleophile" evidence="1">
    <location>
        <position position="5"/>
    </location>
</feature>
<feature type="binding site" evidence="1">
    <location>
        <begin position="5"/>
        <end position="7"/>
    </location>
    <ligand>
        <name>substrate</name>
    </ligand>
</feature>
<feature type="binding site" evidence="2">
    <location>
        <position position="5"/>
    </location>
    <ligand>
        <name>Mg(2+)</name>
        <dbReference type="ChEBI" id="CHEBI:18420"/>
    </ligand>
</feature>
<feature type="binding site" evidence="2">
    <location>
        <position position="7"/>
    </location>
    <ligand>
        <name>Mg(2+)</name>
        <dbReference type="ChEBI" id="CHEBI:18420"/>
    </ligand>
</feature>
<feature type="binding site" evidence="2">
    <location>
        <position position="177"/>
    </location>
    <ligand>
        <name>Mg(2+)</name>
        <dbReference type="ChEBI" id="CHEBI:18420"/>
    </ligand>
</feature>
<feature type="strand" evidence="5">
    <location>
        <begin position="2"/>
        <end position="5"/>
    </location>
</feature>
<feature type="turn" evidence="5">
    <location>
        <begin position="7"/>
        <end position="9"/>
    </location>
</feature>
<feature type="helix" evidence="5">
    <location>
        <begin position="17"/>
        <end position="19"/>
    </location>
</feature>
<feature type="helix" evidence="5">
    <location>
        <begin position="24"/>
        <end position="36"/>
    </location>
</feature>
<feature type="strand" evidence="5">
    <location>
        <begin position="37"/>
        <end position="42"/>
    </location>
</feature>
<feature type="helix" evidence="5">
    <location>
        <begin position="47"/>
        <end position="53"/>
    </location>
</feature>
<feature type="strand" evidence="5">
    <location>
        <begin position="59"/>
        <end position="62"/>
    </location>
</feature>
<feature type="helix" evidence="5">
    <location>
        <begin position="63"/>
        <end position="65"/>
    </location>
</feature>
<feature type="strand" evidence="5">
    <location>
        <begin position="67"/>
        <end position="70"/>
    </location>
</feature>
<feature type="strand" evidence="5">
    <location>
        <begin position="73"/>
        <end position="76"/>
    </location>
</feature>
<feature type="helix" evidence="5">
    <location>
        <begin position="80"/>
        <end position="83"/>
    </location>
</feature>
<feature type="helix" evidence="5">
    <location>
        <begin position="84"/>
        <end position="94"/>
    </location>
</feature>
<feature type="helix" evidence="5">
    <location>
        <begin position="97"/>
        <end position="100"/>
    </location>
</feature>
<feature type="strand" evidence="5">
    <location>
        <begin position="105"/>
        <end position="109"/>
    </location>
</feature>
<feature type="strand" evidence="5">
    <location>
        <begin position="112"/>
        <end position="116"/>
    </location>
</feature>
<feature type="helix" evidence="5">
    <location>
        <begin position="125"/>
        <end position="139"/>
    </location>
</feature>
<feature type="strand" evidence="5">
    <location>
        <begin position="142"/>
        <end position="145"/>
    </location>
</feature>
<feature type="strand" evidence="5">
    <location>
        <begin position="147"/>
        <end position="153"/>
    </location>
</feature>
<feature type="helix" evidence="5">
    <location>
        <begin position="159"/>
        <end position="167"/>
    </location>
</feature>
<feature type="strand" evidence="5">
    <location>
        <begin position="172"/>
        <end position="178"/>
    </location>
</feature>
<feature type="helix" evidence="5">
    <location>
        <begin position="179"/>
        <end position="186"/>
    </location>
</feature>
<feature type="turn" evidence="5">
    <location>
        <begin position="187"/>
        <end position="190"/>
    </location>
</feature>
<feature type="strand" evidence="5">
    <location>
        <begin position="191"/>
        <end position="199"/>
    </location>
</feature>
<feature type="strand" evidence="5">
    <location>
        <begin position="204"/>
        <end position="209"/>
    </location>
</feature>
<feature type="helix" evidence="5">
    <location>
        <begin position="210"/>
        <end position="227"/>
    </location>
</feature>
<protein>
    <recommendedName>
        <fullName>Trehalose-6-phosphate phosphatase-related protein</fullName>
        <shortName>T6PP</shortName>
        <ecNumber>3.1.3.12</ecNumber>
    </recommendedName>
    <alternativeName>
        <fullName>Trehalose 6-phosphate phosphatase</fullName>
    </alternativeName>
    <alternativeName>
        <fullName>Trehalose-phosphatase</fullName>
    </alternativeName>
</protein>
<gene>
    <name type="ordered locus">Ta1209</name>
</gene>
<proteinExistence type="evidence at protein level"/>
<name>OTSBH_THEAC</name>
<reference key="1">
    <citation type="journal article" date="2000" name="Nature">
        <title>The genome sequence of the thermoacidophilic scavenger Thermoplasma acidophilum.</title>
        <authorList>
            <person name="Ruepp A."/>
            <person name="Graml W."/>
            <person name="Santos-Martinez M.-L."/>
            <person name="Koretke K.K."/>
            <person name="Volker C."/>
            <person name="Mewes H.-W."/>
            <person name="Frishman D."/>
            <person name="Stocker S."/>
            <person name="Lupas A.N."/>
            <person name="Baumeister W."/>
        </authorList>
    </citation>
    <scope>NUCLEOTIDE SEQUENCE [LARGE SCALE GENOMIC DNA]</scope>
    <source>
        <strain>ATCC 25905 / DSM 1728 / JCM 9062 / NBRC 15155 / AMRC-C165</strain>
    </source>
</reference>
<reference key="2">
    <citation type="journal article" date="2006" name="Protein Sci.">
        <title>Crystal structure of trehalose-6-phosphate phosphatase-related protein: biochemical and biological implications.</title>
        <authorList>
            <person name="Rao K.N."/>
            <person name="Kumaran D."/>
            <person name="Seetharaman J."/>
            <person name="Bonanno J.B."/>
            <person name="Burley S.K."/>
            <person name="Swaminathan S."/>
        </authorList>
    </citation>
    <scope>X-RAY CRYSTALLOGRAPHY (1.92 ANGSTROMS) IN COMPLEX WITH MAGNESIUM</scope>
    <scope>FUNCTION</scope>
    <scope>CATALYTIC ACTIVITY</scope>
    <scope>BIOPHYSICOCHEMICAL PROPERTIES</scope>
    <scope>SUBSTRATE SPECIFICITY</scope>
    <scope>COFACTOR</scope>
    <scope>INDUCTION</scope>
</reference>
<dbReference type="EC" id="3.1.3.12"/>
<dbReference type="EMBL" id="AL445066">
    <property type="protein sequence ID" value="CAC12334.1"/>
    <property type="molecule type" value="Genomic_DNA"/>
</dbReference>
<dbReference type="PDB" id="1U02">
    <property type="method" value="X-ray"/>
    <property type="resolution" value="1.92 A"/>
    <property type="chains" value="A=2-229"/>
</dbReference>
<dbReference type="PDBsum" id="1U02"/>
<dbReference type="SMR" id="Q9HIW7"/>
<dbReference type="STRING" id="273075.gene:9572432"/>
<dbReference type="PaxDb" id="273075-Ta1209m"/>
<dbReference type="EnsemblBacteria" id="CAC12334">
    <property type="protein sequence ID" value="CAC12334"/>
    <property type="gene ID" value="CAC12334"/>
</dbReference>
<dbReference type="KEGG" id="tac:Ta1209"/>
<dbReference type="eggNOG" id="arCOG01216">
    <property type="taxonomic scope" value="Archaea"/>
</dbReference>
<dbReference type="HOGENOM" id="CLU_037265_2_1_2"/>
<dbReference type="InParanoid" id="Q9HIW7"/>
<dbReference type="BRENDA" id="3.1.3.12">
    <property type="organism ID" value="6324"/>
</dbReference>
<dbReference type="UniPathway" id="UPA00299"/>
<dbReference type="EvolutionaryTrace" id="Q9HIW7"/>
<dbReference type="Proteomes" id="UP000001024">
    <property type="component" value="Chromosome"/>
</dbReference>
<dbReference type="GO" id="GO:0000287">
    <property type="term" value="F:magnesium ion binding"/>
    <property type="evidence" value="ECO:0000314"/>
    <property type="project" value="UniProtKB"/>
</dbReference>
<dbReference type="GO" id="GO:0004805">
    <property type="term" value="F:trehalose-phosphatase activity"/>
    <property type="evidence" value="ECO:0000314"/>
    <property type="project" value="UniProtKB"/>
</dbReference>
<dbReference type="GO" id="GO:0005992">
    <property type="term" value="P:trehalose biosynthetic process"/>
    <property type="evidence" value="ECO:0007669"/>
    <property type="project" value="UniProtKB-UniPathway"/>
</dbReference>
<dbReference type="CDD" id="cd01627">
    <property type="entry name" value="HAD_TPP"/>
    <property type="match status" value="1"/>
</dbReference>
<dbReference type="Gene3D" id="3.40.50.1000">
    <property type="entry name" value="HAD superfamily/HAD-like"/>
    <property type="match status" value="1"/>
</dbReference>
<dbReference type="Gene3D" id="3.30.70.1020">
    <property type="entry name" value="Trehalose-6-phosphate phosphatase related protein, domain 2"/>
    <property type="match status" value="1"/>
</dbReference>
<dbReference type="InterPro" id="IPR036412">
    <property type="entry name" value="HAD-like_sf"/>
</dbReference>
<dbReference type="InterPro" id="IPR006379">
    <property type="entry name" value="HAD-SF_hydro_IIB"/>
</dbReference>
<dbReference type="InterPro" id="IPR023214">
    <property type="entry name" value="HAD_sf"/>
</dbReference>
<dbReference type="InterPro" id="IPR044651">
    <property type="entry name" value="OTSB-like"/>
</dbReference>
<dbReference type="InterPro" id="IPR003337">
    <property type="entry name" value="Trehalose_PPase"/>
</dbReference>
<dbReference type="NCBIfam" id="TIGR01484">
    <property type="entry name" value="HAD-SF-IIB"/>
    <property type="match status" value="1"/>
</dbReference>
<dbReference type="NCBIfam" id="TIGR00685">
    <property type="entry name" value="T6PP"/>
    <property type="match status" value="1"/>
</dbReference>
<dbReference type="PANTHER" id="PTHR43768">
    <property type="entry name" value="TREHALOSE 6-PHOSPHATE PHOSPHATASE"/>
    <property type="match status" value="1"/>
</dbReference>
<dbReference type="PANTHER" id="PTHR43768:SF3">
    <property type="entry name" value="TREHALOSE 6-PHOSPHATE PHOSPHATASE"/>
    <property type="match status" value="1"/>
</dbReference>
<dbReference type="Pfam" id="PF02358">
    <property type="entry name" value="Trehalose_PPase"/>
    <property type="match status" value="1"/>
</dbReference>
<dbReference type="SUPFAM" id="SSF56784">
    <property type="entry name" value="HAD-like"/>
    <property type="match status" value="1"/>
</dbReference>
<sequence length="229" mass="25896">MIFLDYDGTLVPIIMNPEESYADAGLLSLISDLKERFDTYIVTGRSPEEISRFLPLDINMICYHGACSKINGQIVYNNGSDRFLGVFDRIYEDTRSWVSDFPGLRIYRKNLAVLYHLGLMGADMKPKLRSRIEEIARIFGVETYYGKMIIELRVPGVNKGSAIRSVRGERPAIIAGDDATDEAAFEANDDALTIKVGEGETHAKFHVADYIEMRKILKFIEMLGVQKKQ</sequence>
<evidence type="ECO:0000250" key="1"/>
<evidence type="ECO:0000269" key="2">
    <source>
    </source>
</evidence>
<evidence type="ECO:0000305" key="3"/>
<evidence type="ECO:0000305" key="4">
    <source>
    </source>
</evidence>
<evidence type="ECO:0007829" key="5">
    <source>
        <dbReference type="PDB" id="1U02"/>
    </source>
</evidence>
<comment type="function">
    <text evidence="2">Removes the phosphate from trehalose 6-phosphate (Tre6P) to produce free trehalose. Also catalyzes the dephosphorylation of para-nitrophenyl phosphate (pNPP), but with lesser efficiency (in vitro).</text>
</comment>
<comment type="catalytic activity">
    <reaction evidence="2">
        <text>alpha,alpha-trehalose 6-phosphate + H2O = alpha,alpha-trehalose + phosphate</text>
        <dbReference type="Rhea" id="RHEA:23420"/>
        <dbReference type="ChEBI" id="CHEBI:15377"/>
        <dbReference type="ChEBI" id="CHEBI:16551"/>
        <dbReference type="ChEBI" id="CHEBI:43474"/>
        <dbReference type="ChEBI" id="CHEBI:58429"/>
        <dbReference type="EC" id="3.1.3.12"/>
    </reaction>
</comment>
<comment type="cofactor">
    <cofactor evidence="2">
        <name>Mg(2+)</name>
        <dbReference type="ChEBI" id="CHEBI:18420"/>
    </cofactor>
</comment>
<comment type="biophysicochemical properties">
    <kinetics>
        <KM evidence="2">2.7 mM for Tre6P (at pH 8 and 50 degrees Celsius)</KM>
        <KM evidence="2">18 mM for pNPP (at pH 8 and 50 degrees Celsius)</KM>
        <text>kcat is 10 sec(-1) and 0.8 sec(-1) for Tre6P and pNPP, respectively (at pH 8 and 50 degrees Celsius).</text>
    </kinetics>
</comment>
<comment type="pathway">
    <text>Glycan biosynthesis; trehalose biosynthesis.</text>
</comment>
<comment type="induction">
    <text evidence="4">By Tre6P.</text>
</comment>
<comment type="similarity">
    <text evidence="3">Belongs to the trehalose phosphatase family.</text>
</comment>